<dbReference type="EC" id="3.1.26.4" evidence="1"/>
<dbReference type="EMBL" id="CP000781">
    <property type="protein sequence ID" value="ABS66515.1"/>
    <property type="molecule type" value="Genomic_DNA"/>
</dbReference>
<dbReference type="SMR" id="A7IES2"/>
<dbReference type="STRING" id="78245.Xaut_1266"/>
<dbReference type="KEGG" id="xau:Xaut_1266"/>
<dbReference type="eggNOG" id="COG0164">
    <property type="taxonomic scope" value="Bacteria"/>
</dbReference>
<dbReference type="HOGENOM" id="CLU_036532_2_2_5"/>
<dbReference type="PhylomeDB" id="A7IES2"/>
<dbReference type="Proteomes" id="UP000002417">
    <property type="component" value="Chromosome"/>
</dbReference>
<dbReference type="GO" id="GO:0005737">
    <property type="term" value="C:cytoplasm"/>
    <property type="evidence" value="ECO:0007669"/>
    <property type="project" value="UniProtKB-SubCell"/>
</dbReference>
<dbReference type="GO" id="GO:0032299">
    <property type="term" value="C:ribonuclease H2 complex"/>
    <property type="evidence" value="ECO:0007669"/>
    <property type="project" value="TreeGrafter"/>
</dbReference>
<dbReference type="GO" id="GO:0030145">
    <property type="term" value="F:manganese ion binding"/>
    <property type="evidence" value="ECO:0007669"/>
    <property type="project" value="UniProtKB-UniRule"/>
</dbReference>
<dbReference type="GO" id="GO:0003723">
    <property type="term" value="F:RNA binding"/>
    <property type="evidence" value="ECO:0007669"/>
    <property type="project" value="InterPro"/>
</dbReference>
<dbReference type="GO" id="GO:0004523">
    <property type="term" value="F:RNA-DNA hybrid ribonuclease activity"/>
    <property type="evidence" value="ECO:0007669"/>
    <property type="project" value="UniProtKB-UniRule"/>
</dbReference>
<dbReference type="GO" id="GO:0043137">
    <property type="term" value="P:DNA replication, removal of RNA primer"/>
    <property type="evidence" value="ECO:0007669"/>
    <property type="project" value="TreeGrafter"/>
</dbReference>
<dbReference type="GO" id="GO:0006298">
    <property type="term" value="P:mismatch repair"/>
    <property type="evidence" value="ECO:0007669"/>
    <property type="project" value="TreeGrafter"/>
</dbReference>
<dbReference type="CDD" id="cd07182">
    <property type="entry name" value="RNase_HII_bacteria_HII_like"/>
    <property type="match status" value="1"/>
</dbReference>
<dbReference type="Gene3D" id="3.30.420.10">
    <property type="entry name" value="Ribonuclease H-like superfamily/Ribonuclease H"/>
    <property type="match status" value="1"/>
</dbReference>
<dbReference type="HAMAP" id="MF_00052_B">
    <property type="entry name" value="RNase_HII_B"/>
    <property type="match status" value="1"/>
</dbReference>
<dbReference type="InterPro" id="IPR022898">
    <property type="entry name" value="RNase_HII"/>
</dbReference>
<dbReference type="InterPro" id="IPR001352">
    <property type="entry name" value="RNase_HII/HIII"/>
</dbReference>
<dbReference type="InterPro" id="IPR024567">
    <property type="entry name" value="RNase_HII/HIII_dom"/>
</dbReference>
<dbReference type="InterPro" id="IPR012337">
    <property type="entry name" value="RNaseH-like_sf"/>
</dbReference>
<dbReference type="InterPro" id="IPR036397">
    <property type="entry name" value="RNaseH_sf"/>
</dbReference>
<dbReference type="NCBIfam" id="NF000595">
    <property type="entry name" value="PRK00015.1-3"/>
    <property type="match status" value="1"/>
</dbReference>
<dbReference type="PANTHER" id="PTHR10954">
    <property type="entry name" value="RIBONUCLEASE H2 SUBUNIT A"/>
    <property type="match status" value="1"/>
</dbReference>
<dbReference type="PANTHER" id="PTHR10954:SF18">
    <property type="entry name" value="RIBONUCLEASE HII"/>
    <property type="match status" value="1"/>
</dbReference>
<dbReference type="Pfam" id="PF01351">
    <property type="entry name" value="RNase_HII"/>
    <property type="match status" value="1"/>
</dbReference>
<dbReference type="SUPFAM" id="SSF53098">
    <property type="entry name" value="Ribonuclease H-like"/>
    <property type="match status" value="1"/>
</dbReference>
<dbReference type="PROSITE" id="PS51975">
    <property type="entry name" value="RNASE_H_2"/>
    <property type="match status" value="1"/>
</dbReference>
<protein>
    <recommendedName>
        <fullName evidence="1">Ribonuclease HII</fullName>
        <shortName evidence="1">RNase HII</shortName>
        <ecNumber evidence="1">3.1.26.4</ecNumber>
    </recommendedName>
</protein>
<comment type="function">
    <text evidence="1">Endonuclease that specifically degrades the RNA of RNA-DNA hybrids.</text>
</comment>
<comment type="catalytic activity">
    <reaction evidence="1">
        <text>Endonucleolytic cleavage to 5'-phosphomonoester.</text>
        <dbReference type="EC" id="3.1.26.4"/>
    </reaction>
</comment>
<comment type="cofactor">
    <cofactor evidence="1">
        <name>Mn(2+)</name>
        <dbReference type="ChEBI" id="CHEBI:29035"/>
    </cofactor>
    <cofactor evidence="1">
        <name>Mg(2+)</name>
        <dbReference type="ChEBI" id="CHEBI:18420"/>
    </cofactor>
    <text evidence="1">Manganese or magnesium. Binds 1 divalent metal ion per monomer in the absence of substrate. May bind a second metal ion after substrate binding.</text>
</comment>
<comment type="subcellular location">
    <subcellularLocation>
        <location evidence="1">Cytoplasm</location>
    </subcellularLocation>
</comment>
<comment type="similarity">
    <text evidence="1">Belongs to the RNase HII family.</text>
</comment>
<accession>A7IES2</accession>
<feature type="chain" id="PRO_1000091667" description="Ribonuclease HII">
    <location>
        <begin position="1"/>
        <end position="249"/>
    </location>
</feature>
<feature type="domain" description="RNase H type-2" evidence="2">
    <location>
        <begin position="52"/>
        <end position="240"/>
    </location>
</feature>
<feature type="region of interest" description="Disordered" evidence="3">
    <location>
        <begin position="1"/>
        <end position="31"/>
    </location>
</feature>
<feature type="compositionally biased region" description="Pro residues" evidence="3">
    <location>
        <begin position="1"/>
        <end position="19"/>
    </location>
</feature>
<feature type="binding site" evidence="1">
    <location>
        <position position="58"/>
    </location>
    <ligand>
        <name>a divalent metal cation</name>
        <dbReference type="ChEBI" id="CHEBI:60240"/>
    </ligand>
</feature>
<feature type="binding site" evidence="1">
    <location>
        <position position="59"/>
    </location>
    <ligand>
        <name>a divalent metal cation</name>
        <dbReference type="ChEBI" id="CHEBI:60240"/>
    </ligand>
</feature>
<feature type="binding site" evidence="1">
    <location>
        <position position="149"/>
    </location>
    <ligand>
        <name>a divalent metal cation</name>
        <dbReference type="ChEBI" id="CHEBI:60240"/>
    </ligand>
</feature>
<reference key="1">
    <citation type="submission" date="2007-07" db="EMBL/GenBank/DDBJ databases">
        <title>Complete sequence of chromosome of Xanthobacter autotrophicus Py2.</title>
        <authorList>
            <consortium name="US DOE Joint Genome Institute"/>
            <person name="Copeland A."/>
            <person name="Lucas S."/>
            <person name="Lapidus A."/>
            <person name="Barry K."/>
            <person name="Glavina del Rio T."/>
            <person name="Hammon N."/>
            <person name="Israni S."/>
            <person name="Dalin E."/>
            <person name="Tice H."/>
            <person name="Pitluck S."/>
            <person name="Sims D."/>
            <person name="Brettin T."/>
            <person name="Bruce D."/>
            <person name="Detter J.C."/>
            <person name="Han C."/>
            <person name="Tapia R."/>
            <person name="Brainard J."/>
            <person name="Schmutz J."/>
            <person name="Larimer F."/>
            <person name="Land M."/>
            <person name="Hauser L."/>
            <person name="Kyrpides N."/>
            <person name="Kim E."/>
            <person name="Ensigns S.A."/>
            <person name="Richardson P."/>
        </authorList>
    </citation>
    <scope>NUCLEOTIDE SEQUENCE [LARGE SCALE GENOMIC DNA]</scope>
    <source>
        <strain>ATCC BAA-1158 / Py2</strain>
    </source>
</reference>
<evidence type="ECO:0000255" key="1">
    <source>
        <dbReference type="HAMAP-Rule" id="MF_00052"/>
    </source>
</evidence>
<evidence type="ECO:0000255" key="2">
    <source>
        <dbReference type="PROSITE-ProRule" id="PRU01319"/>
    </source>
</evidence>
<evidence type="ECO:0000256" key="3">
    <source>
        <dbReference type="SAM" id="MobiDB-lite"/>
    </source>
</evidence>
<name>RNH2_XANP2</name>
<gene>
    <name evidence="1" type="primary">rnhB</name>
    <name type="ordered locus">Xaut_1266</name>
</gene>
<organism>
    <name type="scientific">Xanthobacter autotrophicus (strain ATCC BAA-1158 / Py2)</name>
    <dbReference type="NCBI Taxonomy" id="78245"/>
    <lineage>
        <taxon>Bacteria</taxon>
        <taxon>Pseudomonadati</taxon>
        <taxon>Pseudomonadota</taxon>
        <taxon>Alphaproteobacteria</taxon>
        <taxon>Hyphomicrobiales</taxon>
        <taxon>Xanthobacteraceae</taxon>
        <taxon>Xanthobacter</taxon>
    </lineage>
</organism>
<sequence>MAPRPKAPPQPAEPDPALPRPRGRPPKAGAVTAGWVGLDFTRERALYADGRAPVAGADEVGRGPLAGPVVAAAVVLDPARVPQGLDDSKKLTRAKRESLYLEICATAEVAIALAPPERIDRDNIRQATLWALANAVRGLPCRPAFLLVDGNDPPRVDCEVEAIVGGDGLVASIAAASIVAKVVRDRLMAGVGAAFPAYGFERHMGYGTREHGAALKAHGPCLHHRRSFAPVREQQLGLFPAPGELEEAD</sequence>
<proteinExistence type="inferred from homology"/>
<keyword id="KW-0963">Cytoplasm</keyword>
<keyword id="KW-0255">Endonuclease</keyword>
<keyword id="KW-0378">Hydrolase</keyword>
<keyword id="KW-0464">Manganese</keyword>
<keyword id="KW-0479">Metal-binding</keyword>
<keyword id="KW-0540">Nuclease</keyword>
<keyword id="KW-1185">Reference proteome</keyword>